<proteinExistence type="inferred from homology"/>
<protein>
    <recommendedName>
        <fullName evidence="1">UPF0434 protein YcaR</fullName>
    </recommendedName>
</protein>
<gene>
    <name evidence="1" type="primary">ycaR</name>
    <name type="ordered locus">SDY_2341</name>
</gene>
<keyword id="KW-1185">Reference proteome</keyword>
<organism>
    <name type="scientific">Shigella dysenteriae serotype 1 (strain Sd197)</name>
    <dbReference type="NCBI Taxonomy" id="300267"/>
    <lineage>
        <taxon>Bacteria</taxon>
        <taxon>Pseudomonadati</taxon>
        <taxon>Pseudomonadota</taxon>
        <taxon>Gammaproteobacteria</taxon>
        <taxon>Enterobacterales</taxon>
        <taxon>Enterobacteriaceae</taxon>
        <taxon>Shigella</taxon>
    </lineage>
</organism>
<sequence length="60" mass="6855">MDHRLLEIIACPVCNGKLWYNQEKQELICKLDNLAFPLRDGIPVLLETEARVLTADESKS</sequence>
<reference key="1">
    <citation type="journal article" date="2005" name="Nucleic Acids Res.">
        <title>Genome dynamics and diversity of Shigella species, the etiologic agents of bacillary dysentery.</title>
        <authorList>
            <person name="Yang F."/>
            <person name="Yang J."/>
            <person name="Zhang X."/>
            <person name="Chen L."/>
            <person name="Jiang Y."/>
            <person name="Yan Y."/>
            <person name="Tang X."/>
            <person name="Wang J."/>
            <person name="Xiong Z."/>
            <person name="Dong J."/>
            <person name="Xue Y."/>
            <person name="Zhu Y."/>
            <person name="Xu X."/>
            <person name="Sun L."/>
            <person name="Chen S."/>
            <person name="Nie H."/>
            <person name="Peng J."/>
            <person name="Xu J."/>
            <person name="Wang Y."/>
            <person name="Yuan Z."/>
            <person name="Wen Y."/>
            <person name="Yao Z."/>
            <person name="Shen Y."/>
            <person name="Qiang B."/>
            <person name="Hou Y."/>
            <person name="Yu J."/>
            <person name="Jin Q."/>
        </authorList>
    </citation>
    <scope>NUCLEOTIDE SEQUENCE [LARGE SCALE GENOMIC DNA]</scope>
    <source>
        <strain>Sd197</strain>
    </source>
</reference>
<accession>Q32E37</accession>
<evidence type="ECO:0000255" key="1">
    <source>
        <dbReference type="HAMAP-Rule" id="MF_01187"/>
    </source>
</evidence>
<comment type="similarity">
    <text evidence="1">Belongs to the UPF0434 family.</text>
</comment>
<feature type="chain" id="PRO_0000291172" description="UPF0434 protein YcaR">
    <location>
        <begin position="1"/>
        <end position="60"/>
    </location>
</feature>
<dbReference type="EMBL" id="CP000034">
    <property type="protein sequence ID" value="ABB62418.1"/>
    <property type="molecule type" value="Genomic_DNA"/>
</dbReference>
<dbReference type="RefSeq" id="WP_000350058.1">
    <property type="nucleotide sequence ID" value="NC_007606.1"/>
</dbReference>
<dbReference type="RefSeq" id="YP_403909.1">
    <property type="nucleotide sequence ID" value="NC_007606.1"/>
</dbReference>
<dbReference type="SMR" id="Q32E37"/>
<dbReference type="STRING" id="300267.SDY_2341"/>
<dbReference type="EnsemblBacteria" id="ABB62418">
    <property type="protein sequence ID" value="ABB62418"/>
    <property type="gene ID" value="SDY_2341"/>
</dbReference>
<dbReference type="GeneID" id="93776498"/>
<dbReference type="KEGG" id="sdy:SDY_2341"/>
<dbReference type="PATRIC" id="fig|300267.13.peg.2825"/>
<dbReference type="HOGENOM" id="CLU_155659_3_1_6"/>
<dbReference type="Proteomes" id="UP000002716">
    <property type="component" value="Chromosome"/>
</dbReference>
<dbReference type="GO" id="GO:0005829">
    <property type="term" value="C:cytosol"/>
    <property type="evidence" value="ECO:0007669"/>
    <property type="project" value="TreeGrafter"/>
</dbReference>
<dbReference type="FunFam" id="2.20.25.10:FF:000002">
    <property type="entry name" value="UPF0434 protein YcaR"/>
    <property type="match status" value="1"/>
</dbReference>
<dbReference type="Gene3D" id="2.20.25.10">
    <property type="match status" value="1"/>
</dbReference>
<dbReference type="HAMAP" id="MF_01187">
    <property type="entry name" value="UPF0434"/>
    <property type="match status" value="1"/>
</dbReference>
<dbReference type="InterPro" id="IPR005651">
    <property type="entry name" value="Trm112-like"/>
</dbReference>
<dbReference type="NCBIfam" id="NF008806">
    <property type="entry name" value="PRK11827.1"/>
    <property type="match status" value="1"/>
</dbReference>
<dbReference type="PANTHER" id="PTHR33505:SF4">
    <property type="entry name" value="PROTEIN PREY, MITOCHONDRIAL"/>
    <property type="match status" value="1"/>
</dbReference>
<dbReference type="PANTHER" id="PTHR33505">
    <property type="entry name" value="ZGC:162634"/>
    <property type="match status" value="1"/>
</dbReference>
<dbReference type="Pfam" id="PF03966">
    <property type="entry name" value="Trm112p"/>
    <property type="match status" value="1"/>
</dbReference>
<dbReference type="SUPFAM" id="SSF158997">
    <property type="entry name" value="Trm112p-like"/>
    <property type="match status" value="1"/>
</dbReference>
<name>YCAR_SHIDS</name>